<protein>
    <recommendedName>
        <fullName>Putative antitoxin VapB5</fullName>
    </recommendedName>
</protein>
<name>VAPB5_MYCTO</name>
<accession>P9WF18</accession>
<accession>L0T7A0</accession>
<accession>P96916</accession>
<accession>Q7D9I5</accession>
<keyword id="KW-1185">Reference proteome</keyword>
<keyword id="KW-1277">Toxin-antitoxin system</keyword>
<reference key="1">
    <citation type="journal article" date="2002" name="J. Bacteriol.">
        <title>Whole-genome comparison of Mycobacterium tuberculosis clinical and laboratory strains.</title>
        <authorList>
            <person name="Fleischmann R.D."/>
            <person name="Alland D."/>
            <person name="Eisen J.A."/>
            <person name="Carpenter L."/>
            <person name="White O."/>
            <person name="Peterson J.D."/>
            <person name="DeBoy R.T."/>
            <person name="Dodson R.J."/>
            <person name="Gwinn M.L."/>
            <person name="Haft D.H."/>
            <person name="Hickey E.K."/>
            <person name="Kolonay J.F."/>
            <person name="Nelson W.C."/>
            <person name="Umayam L.A."/>
            <person name="Ermolaeva M.D."/>
            <person name="Salzberg S.L."/>
            <person name="Delcher A."/>
            <person name="Utterback T.R."/>
            <person name="Weidman J.F."/>
            <person name="Khouri H.M."/>
            <person name="Gill J."/>
            <person name="Mikula A."/>
            <person name="Bishai W."/>
            <person name="Jacobs W.R. Jr."/>
            <person name="Venter J.C."/>
            <person name="Fraser C.M."/>
        </authorList>
    </citation>
    <scope>NUCLEOTIDE SEQUENCE [LARGE SCALE GENOMIC DNA]</scope>
    <source>
        <strain>CDC 1551 / Oshkosh</strain>
    </source>
</reference>
<feature type="chain" id="PRO_0000428616" description="Putative antitoxin VapB5">
    <location>
        <begin position="1"/>
        <end position="86"/>
    </location>
</feature>
<sequence length="86" mass="9493">MSEVASRELRNDTAGVLRRVRAGEDVTITVSGRPVAVLTPVRPRRRRWLSKTEFLSRLRGAQADPGLRNDLAVLAGDTTEDLGPIR</sequence>
<organism>
    <name type="scientific">Mycobacterium tuberculosis (strain CDC 1551 / Oshkosh)</name>
    <dbReference type="NCBI Taxonomy" id="83331"/>
    <lineage>
        <taxon>Bacteria</taxon>
        <taxon>Bacillati</taxon>
        <taxon>Actinomycetota</taxon>
        <taxon>Actinomycetes</taxon>
        <taxon>Mycobacteriales</taxon>
        <taxon>Mycobacteriaceae</taxon>
        <taxon>Mycobacterium</taxon>
        <taxon>Mycobacterium tuberculosis complex</taxon>
    </lineage>
</organism>
<evidence type="ECO:0000250" key="1"/>
<evidence type="ECO:0000305" key="2"/>
<proteinExistence type="inferred from homology"/>
<comment type="function">
    <text evidence="1">Probable antitoxin component of a probable type II toxin-antitoxin (TA) system. The cognate toxin is VapC5 (By similarity).</text>
</comment>
<comment type="subunit">
    <text evidence="1">Forms a complex with VapC5.</text>
</comment>
<comment type="similarity">
    <text evidence="2">Belongs to the phD/YefM antitoxin family.</text>
</comment>
<dbReference type="EMBL" id="AE000516">
    <property type="protein sequence ID" value="AAK44878.1"/>
    <property type="molecule type" value="Genomic_DNA"/>
</dbReference>
<dbReference type="PIR" id="G70611">
    <property type="entry name" value="G70611"/>
</dbReference>
<dbReference type="RefSeq" id="WP_003403244.1">
    <property type="nucleotide sequence ID" value="NZ_KK341227.1"/>
</dbReference>
<dbReference type="SMR" id="P9WF18"/>
<dbReference type="KEGG" id="mtc:MT0654"/>
<dbReference type="PATRIC" id="fig|83331.31.peg.694"/>
<dbReference type="HOGENOM" id="CLU_174702_2_0_11"/>
<dbReference type="Proteomes" id="UP000001020">
    <property type="component" value="Chromosome"/>
</dbReference>
<dbReference type="GO" id="GO:0097351">
    <property type="term" value="F:toxin sequestering activity"/>
    <property type="evidence" value="ECO:0007669"/>
    <property type="project" value="TreeGrafter"/>
</dbReference>
<dbReference type="FunFam" id="3.40.1620.10:FF:000002">
    <property type="entry name" value="Antitoxin"/>
    <property type="match status" value="1"/>
</dbReference>
<dbReference type="Gene3D" id="3.40.1620.10">
    <property type="entry name" value="YefM-like domain"/>
    <property type="match status" value="1"/>
</dbReference>
<dbReference type="InterPro" id="IPR006442">
    <property type="entry name" value="Antitoxin_Phd/YefM"/>
</dbReference>
<dbReference type="InterPro" id="IPR051416">
    <property type="entry name" value="phD-YefM_TA_antitoxins"/>
</dbReference>
<dbReference type="InterPro" id="IPR036165">
    <property type="entry name" value="YefM-like_sf"/>
</dbReference>
<dbReference type="NCBIfam" id="TIGR01552">
    <property type="entry name" value="phd_fam"/>
    <property type="match status" value="1"/>
</dbReference>
<dbReference type="PANTHER" id="PTHR35377:SF5">
    <property type="entry name" value="ANTITOXIN VAPB46"/>
    <property type="match status" value="1"/>
</dbReference>
<dbReference type="PANTHER" id="PTHR35377">
    <property type="entry name" value="ANTITOXIN VAPB49-RELATED-RELATED"/>
    <property type="match status" value="1"/>
</dbReference>
<dbReference type="Pfam" id="PF02604">
    <property type="entry name" value="PhdYeFM_antitox"/>
    <property type="match status" value="1"/>
</dbReference>
<dbReference type="SUPFAM" id="SSF143120">
    <property type="entry name" value="YefM-like"/>
    <property type="match status" value="1"/>
</dbReference>
<gene>
    <name type="primary">vapB5</name>
    <name type="ordered locus">MT0654</name>
</gene>